<keyword id="KW-1185">Reference proteome</keyword>
<keyword id="KW-0687">Ribonucleoprotein</keyword>
<keyword id="KW-0689">Ribosomal protein</keyword>
<comment type="similarity">
    <text evidence="1">Belongs to the bacterial ribosomal protein bL33 family.</text>
</comment>
<sequence>MAKDGPRIIVKMESTAGTGFYYTTTKNRRNTQAKMELRKYDPVAKKHVVFKEKKV</sequence>
<feature type="chain" id="PRO_1000204907" description="Large ribosomal subunit protein bL33">
    <location>
        <begin position="1"/>
        <end position="55"/>
    </location>
</feature>
<reference key="1">
    <citation type="journal article" date="2009" name="PLoS Genet.">
        <title>Alliance of proteomics and genomics to unravel the specificities of Sahara bacterium Deinococcus deserti.</title>
        <authorList>
            <person name="de Groot A."/>
            <person name="Dulermo R."/>
            <person name="Ortet P."/>
            <person name="Blanchard L."/>
            <person name="Guerin P."/>
            <person name="Fernandez B."/>
            <person name="Vacherie B."/>
            <person name="Dossat C."/>
            <person name="Jolivet E."/>
            <person name="Siguier P."/>
            <person name="Chandler M."/>
            <person name="Barakat M."/>
            <person name="Dedieu A."/>
            <person name="Barbe V."/>
            <person name="Heulin T."/>
            <person name="Sommer S."/>
            <person name="Achouak W."/>
            <person name="Armengaud J."/>
        </authorList>
    </citation>
    <scope>NUCLEOTIDE SEQUENCE [LARGE SCALE GENOMIC DNA]</scope>
    <source>
        <strain>DSM 17065 / CIP 109153 / LMG 22923 / VCD115</strain>
    </source>
</reference>
<name>RL33_DEIDV</name>
<evidence type="ECO:0000255" key="1">
    <source>
        <dbReference type="HAMAP-Rule" id="MF_00294"/>
    </source>
</evidence>
<evidence type="ECO:0000305" key="2"/>
<accession>C1D0S9</accession>
<dbReference type="EMBL" id="CP001114">
    <property type="protein sequence ID" value="ACO45453.1"/>
    <property type="molecule type" value="Genomic_DNA"/>
</dbReference>
<dbReference type="RefSeq" id="WP_012692576.1">
    <property type="nucleotide sequence ID" value="NC_012526.1"/>
</dbReference>
<dbReference type="SMR" id="C1D0S9"/>
<dbReference type="STRING" id="546414.Deide_06110"/>
<dbReference type="PaxDb" id="546414-Deide_06110"/>
<dbReference type="KEGG" id="ddr:Deide_06110"/>
<dbReference type="eggNOG" id="COG0267">
    <property type="taxonomic scope" value="Bacteria"/>
</dbReference>
<dbReference type="HOGENOM" id="CLU_190949_1_1_0"/>
<dbReference type="OrthoDB" id="21586at2"/>
<dbReference type="Proteomes" id="UP000002208">
    <property type="component" value="Chromosome"/>
</dbReference>
<dbReference type="GO" id="GO:0022625">
    <property type="term" value="C:cytosolic large ribosomal subunit"/>
    <property type="evidence" value="ECO:0007669"/>
    <property type="project" value="TreeGrafter"/>
</dbReference>
<dbReference type="GO" id="GO:0003735">
    <property type="term" value="F:structural constituent of ribosome"/>
    <property type="evidence" value="ECO:0007669"/>
    <property type="project" value="InterPro"/>
</dbReference>
<dbReference type="GO" id="GO:0006412">
    <property type="term" value="P:translation"/>
    <property type="evidence" value="ECO:0007669"/>
    <property type="project" value="UniProtKB-UniRule"/>
</dbReference>
<dbReference type="FunFam" id="2.20.28.120:FF:000007">
    <property type="entry name" value="50S ribosomal protein L33"/>
    <property type="match status" value="1"/>
</dbReference>
<dbReference type="Gene3D" id="2.20.28.120">
    <property type="entry name" value="Ribosomal protein L33"/>
    <property type="match status" value="1"/>
</dbReference>
<dbReference type="HAMAP" id="MF_00294">
    <property type="entry name" value="Ribosomal_bL33"/>
    <property type="match status" value="1"/>
</dbReference>
<dbReference type="InterPro" id="IPR001705">
    <property type="entry name" value="Ribosomal_bL33"/>
</dbReference>
<dbReference type="InterPro" id="IPR018264">
    <property type="entry name" value="Ribosomal_bL33_CS"/>
</dbReference>
<dbReference type="InterPro" id="IPR038584">
    <property type="entry name" value="Ribosomal_bL33_sf"/>
</dbReference>
<dbReference type="InterPro" id="IPR011332">
    <property type="entry name" value="Ribosomal_zn-bd"/>
</dbReference>
<dbReference type="NCBIfam" id="NF001860">
    <property type="entry name" value="PRK00595.1"/>
    <property type="match status" value="1"/>
</dbReference>
<dbReference type="NCBIfam" id="TIGR01023">
    <property type="entry name" value="rpmG_bact"/>
    <property type="match status" value="1"/>
</dbReference>
<dbReference type="PANTHER" id="PTHR15238">
    <property type="entry name" value="54S RIBOSOMAL PROTEIN L39, MITOCHONDRIAL"/>
    <property type="match status" value="1"/>
</dbReference>
<dbReference type="PANTHER" id="PTHR15238:SF1">
    <property type="entry name" value="LARGE RIBOSOMAL SUBUNIT PROTEIN BL33M"/>
    <property type="match status" value="1"/>
</dbReference>
<dbReference type="Pfam" id="PF00471">
    <property type="entry name" value="Ribosomal_L33"/>
    <property type="match status" value="1"/>
</dbReference>
<dbReference type="SUPFAM" id="SSF57829">
    <property type="entry name" value="Zn-binding ribosomal proteins"/>
    <property type="match status" value="1"/>
</dbReference>
<dbReference type="PROSITE" id="PS00582">
    <property type="entry name" value="RIBOSOMAL_L33"/>
    <property type="match status" value="1"/>
</dbReference>
<proteinExistence type="inferred from homology"/>
<protein>
    <recommendedName>
        <fullName evidence="1">Large ribosomal subunit protein bL33</fullName>
    </recommendedName>
    <alternativeName>
        <fullName evidence="2">50S ribosomal protein L33</fullName>
    </alternativeName>
</protein>
<gene>
    <name evidence="1" type="primary">rpmG</name>
    <name type="ordered locus">Deide_06110</name>
</gene>
<organism>
    <name type="scientific">Deinococcus deserti (strain DSM 17065 / CIP 109153 / LMG 22923 / VCD115)</name>
    <dbReference type="NCBI Taxonomy" id="546414"/>
    <lineage>
        <taxon>Bacteria</taxon>
        <taxon>Thermotogati</taxon>
        <taxon>Deinococcota</taxon>
        <taxon>Deinococci</taxon>
        <taxon>Deinococcales</taxon>
        <taxon>Deinococcaceae</taxon>
        <taxon>Deinococcus</taxon>
    </lineage>
</organism>